<protein>
    <recommendedName>
        <fullName evidence="1">3-hydroxyacyl-[acyl-carrier-protein] dehydratase FabZ</fullName>
        <ecNumber evidence="1">4.2.1.59</ecNumber>
    </recommendedName>
    <alternativeName>
        <fullName evidence="1">(3R)-hydroxymyristoyl-[acyl-carrier-protein] dehydratase</fullName>
        <shortName evidence="1">(3R)-hydroxymyristoyl-ACP dehydrase</shortName>
    </alternativeName>
    <alternativeName>
        <fullName evidence="1">Beta-hydroxyacyl-ACP dehydratase</fullName>
    </alternativeName>
</protein>
<accession>Q9Z7Q3</accession>
<feature type="chain" id="PRO_0000091663" description="3-hydroxyacyl-[acyl-carrier-protein] dehydratase FabZ">
    <location>
        <begin position="1"/>
        <end position="153"/>
    </location>
</feature>
<feature type="active site" evidence="1">
    <location>
        <position position="54"/>
    </location>
</feature>
<comment type="function">
    <text evidence="1">Involved in unsaturated fatty acids biosynthesis. Catalyzes the dehydration of short chain beta-hydroxyacyl-ACPs and long chain saturated and unsaturated beta-hydroxyacyl-ACPs.</text>
</comment>
<comment type="catalytic activity">
    <reaction evidence="1">
        <text>a (3R)-hydroxyacyl-[ACP] = a (2E)-enoyl-[ACP] + H2O</text>
        <dbReference type="Rhea" id="RHEA:13097"/>
        <dbReference type="Rhea" id="RHEA-COMP:9925"/>
        <dbReference type="Rhea" id="RHEA-COMP:9945"/>
        <dbReference type="ChEBI" id="CHEBI:15377"/>
        <dbReference type="ChEBI" id="CHEBI:78784"/>
        <dbReference type="ChEBI" id="CHEBI:78827"/>
        <dbReference type="EC" id="4.2.1.59"/>
    </reaction>
</comment>
<comment type="subcellular location">
    <subcellularLocation>
        <location evidence="1">Cytoplasm</location>
    </subcellularLocation>
</comment>
<comment type="similarity">
    <text evidence="1">Belongs to the thioester dehydratase family. FabZ subfamily.</text>
</comment>
<dbReference type="EC" id="4.2.1.59" evidence="1"/>
<dbReference type="EMBL" id="AE001363">
    <property type="protein sequence ID" value="AAD18790.1"/>
    <property type="molecule type" value="Genomic_DNA"/>
</dbReference>
<dbReference type="EMBL" id="AE002161">
    <property type="protein sequence ID" value="AAF37980.1"/>
    <property type="molecule type" value="Genomic_DNA"/>
</dbReference>
<dbReference type="EMBL" id="BA000008">
    <property type="protein sequence ID" value="BAA98858.1"/>
    <property type="molecule type" value="Genomic_DNA"/>
</dbReference>
<dbReference type="EMBL" id="AE009440">
    <property type="protein sequence ID" value="AAP98606.1"/>
    <property type="molecule type" value="Genomic_DNA"/>
</dbReference>
<dbReference type="PIR" id="D72051">
    <property type="entry name" value="D72051"/>
</dbReference>
<dbReference type="PIR" id="H86571">
    <property type="entry name" value="H86571"/>
</dbReference>
<dbReference type="RefSeq" id="NP_224847.1">
    <property type="nucleotide sequence ID" value="NC_000922.1"/>
</dbReference>
<dbReference type="RefSeq" id="WP_010883289.1">
    <property type="nucleotide sequence ID" value="NZ_LN847257.1"/>
</dbReference>
<dbReference type="SMR" id="Q9Z7Q3"/>
<dbReference type="STRING" id="406984.CPK_ORF00051"/>
<dbReference type="GeneID" id="45050701"/>
<dbReference type="KEGG" id="cpa:CP_0096"/>
<dbReference type="KEGG" id="cpj:fabZ"/>
<dbReference type="KEGG" id="cpn:CPn_0651"/>
<dbReference type="KEGG" id="cpt:CpB0677"/>
<dbReference type="PATRIC" id="fig|115713.3.peg.721"/>
<dbReference type="eggNOG" id="COG0764">
    <property type="taxonomic scope" value="Bacteria"/>
</dbReference>
<dbReference type="HOGENOM" id="CLU_078912_3_3_0"/>
<dbReference type="OMA" id="FPGRPLM"/>
<dbReference type="OrthoDB" id="9772788at2"/>
<dbReference type="Proteomes" id="UP000000583">
    <property type="component" value="Chromosome"/>
</dbReference>
<dbReference type="Proteomes" id="UP000000801">
    <property type="component" value="Chromosome"/>
</dbReference>
<dbReference type="GO" id="GO:0005737">
    <property type="term" value="C:cytoplasm"/>
    <property type="evidence" value="ECO:0007669"/>
    <property type="project" value="UniProtKB-SubCell"/>
</dbReference>
<dbReference type="GO" id="GO:0016020">
    <property type="term" value="C:membrane"/>
    <property type="evidence" value="ECO:0007669"/>
    <property type="project" value="GOC"/>
</dbReference>
<dbReference type="GO" id="GO:0019171">
    <property type="term" value="F:(3R)-hydroxyacyl-[acyl-carrier-protein] dehydratase activity"/>
    <property type="evidence" value="ECO:0007669"/>
    <property type="project" value="UniProtKB-EC"/>
</dbReference>
<dbReference type="GO" id="GO:0006633">
    <property type="term" value="P:fatty acid biosynthetic process"/>
    <property type="evidence" value="ECO:0007669"/>
    <property type="project" value="UniProtKB-UniRule"/>
</dbReference>
<dbReference type="GO" id="GO:0009245">
    <property type="term" value="P:lipid A biosynthetic process"/>
    <property type="evidence" value="ECO:0007669"/>
    <property type="project" value="UniProtKB-UniRule"/>
</dbReference>
<dbReference type="CDD" id="cd01288">
    <property type="entry name" value="FabZ"/>
    <property type="match status" value="1"/>
</dbReference>
<dbReference type="FunFam" id="3.10.129.10:FF:000001">
    <property type="entry name" value="3-hydroxyacyl-[acyl-carrier-protein] dehydratase FabZ"/>
    <property type="match status" value="1"/>
</dbReference>
<dbReference type="Gene3D" id="3.10.129.10">
    <property type="entry name" value="Hotdog Thioesterase"/>
    <property type="match status" value="1"/>
</dbReference>
<dbReference type="HAMAP" id="MF_00406">
    <property type="entry name" value="FabZ"/>
    <property type="match status" value="1"/>
</dbReference>
<dbReference type="InterPro" id="IPR013114">
    <property type="entry name" value="FabA_FabZ"/>
</dbReference>
<dbReference type="InterPro" id="IPR010084">
    <property type="entry name" value="FabZ"/>
</dbReference>
<dbReference type="InterPro" id="IPR029069">
    <property type="entry name" value="HotDog_dom_sf"/>
</dbReference>
<dbReference type="NCBIfam" id="TIGR01750">
    <property type="entry name" value="fabZ"/>
    <property type="match status" value="1"/>
</dbReference>
<dbReference type="NCBIfam" id="NF000582">
    <property type="entry name" value="PRK00006.1"/>
    <property type="match status" value="1"/>
</dbReference>
<dbReference type="PANTHER" id="PTHR30272">
    <property type="entry name" value="3-HYDROXYACYL-[ACYL-CARRIER-PROTEIN] DEHYDRATASE"/>
    <property type="match status" value="1"/>
</dbReference>
<dbReference type="PANTHER" id="PTHR30272:SF1">
    <property type="entry name" value="3-HYDROXYACYL-[ACYL-CARRIER-PROTEIN] DEHYDRATASE"/>
    <property type="match status" value="1"/>
</dbReference>
<dbReference type="Pfam" id="PF07977">
    <property type="entry name" value="FabA"/>
    <property type="match status" value="1"/>
</dbReference>
<dbReference type="SUPFAM" id="SSF54637">
    <property type="entry name" value="Thioesterase/thiol ester dehydrase-isomerase"/>
    <property type="match status" value="1"/>
</dbReference>
<keyword id="KW-0963">Cytoplasm</keyword>
<keyword id="KW-0441">Lipid A biosynthesis</keyword>
<keyword id="KW-0444">Lipid biosynthesis</keyword>
<keyword id="KW-0443">Lipid metabolism</keyword>
<keyword id="KW-0456">Lyase</keyword>
<reference key="1">
    <citation type="journal article" date="1999" name="Nat. Genet.">
        <title>Comparative genomes of Chlamydia pneumoniae and C. trachomatis.</title>
        <authorList>
            <person name="Kalman S."/>
            <person name="Mitchell W.P."/>
            <person name="Marathe R."/>
            <person name="Lammel C.J."/>
            <person name="Fan J."/>
            <person name="Hyman R.W."/>
            <person name="Olinger L."/>
            <person name="Grimwood J."/>
            <person name="Davis R.W."/>
            <person name="Stephens R.S."/>
        </authorList>
    </citation>
    <scope>NUCLEOTIDE SEQUENCE [LARGE SCALE GENOMIC DNA]</scope>
    <source>
        <strain>CWL029</strain>
    </source>
</reference>
<reference key="2">
    <citation type="journal article" date="2000" name="Nucleic Acids Res.">
        <title>Genome sequences of Chlamydia trachomatis MoPn and Chlamydia pneumoniae AR39.</title>
        <authorList>
            <person name="Read T.D."/>
            <person name="Brunham R.C."/>
            <person name="Shen C."/>
            <person name="Gill S.R."/>
            <person name="Heidelberg J.F."/>
            <person name="White O."/>
            <person name="Hickey E.K."/>
            <person name="Peterson J.D."/>
            <person name="Utterback T.R."/>
            <person name="Berry K.J."/>
            <person name="Bass S."/>
            <person name="Linher K.D."/>
            <person name="Weidman J.F."/>
            <person name="Khouri H.M."/>
            <person name="Craven B."/>
            <person name="Bowman C."/>
            <person name="Dodson R.J."/>
            <person name="Gwinn M.L."/>
            <person name="Nelson W.C."/>
            <person name="DeBoy R.T."/>
            <person name="Kolonay J.F."/>
            <person name="McClarty G."/>
            <person name="Salzberg S.L."/>
            <person name="Eisen J.A."/>
            <person name="Fraser C.M."/>
        </authorList>
    </citation>
    <scope>NUCLEOTIDE SEQUENCE [LARGE SCALE GENOMIC DNA]</scope>
    <source>
        <strain>AR39</strain>
    </source>
</reference>
<reference key="3">
    <citation type="journal article" date="2000" name="Nucleic Acids Res.">
        <title>Comparison of whole genome sequences of Chlamydia pneumoniae J138 from Japan and CWL029 from USA.</title>
        <authorList>
            <person name="Shirai M."/>
            <person name="Hirakawa H."/>
            <person name="Kimoto M."/>
            <person name="Tabuchi M."/>
            <person name="Kishi F."/>
            <person name="Ouchi K."/>
            <person name="Shiba T."/>
            <person name="Ishii K."/>
            <person name="Hattori M."/>
            <person name="Kuhara S."/>
            <person name="Nakazawa T."/>
        </authorList>
    </citation>
    <scope>NUCLEOTIDE SEQUENCE [LARGE SCALE GENOMIC DNA]</scope>
    <source>
        <strain>J138</strain>
    </source>
</reference>
<reference key="4">
    <citation type="submission" date="2002-05" db="EMBL/GenBank/DDBJ databases">
        <title>The genome sequence of Chlamydia pneumoniae TW183 and comparison with other Chlamydia strains based on whole genome sequence analysis.</title>
        <authorList>
            <person name="Geng M.M."/>
            <person name="Schuhmacher A."/>
            <person name="Muehldorfer I."/>
            <person name="Bensch K.W."/>
            <person name="Schaefer K.P."/>
            <person name="Schneider S."/>
            <person name="Pohl T."/>
            <person name="Essig A."/>
            <person name="Marre R."/>
            <person name="Melchers K."/>
        </authorList>
    </citation>
    <scope>NUCLEOTIDE SEQUENCE [LARGE SCALE GENOMIC DNA]</scope>
    <source>
        <strain>TW-183</strain>
    </source>
</reference>
<evidence type="ECO:0000255" key="1">
    <source>
        <dbReference type="HAMAP-Rule" id="MF_00406"/>
    </source>
</evidence>
<proteinExistence type="inferred from homology"/>
<gene>
    <name evidence="1" type="primary">fabZ</name>
    <name type="ordered locus">CPn_0651</name>
    <name type="ordered locus">CP_0096</name>
    <name type="ordered locus">CpB0677</name>
</gene>
<organism>
    <name type="scientific">Chlamydia pneumoniae</name>
    <name type="common">Chlamydophila pneumoniae</name>
    <dbReference type="NCBI Taxonomy" id="83558"/>
    <lineage>
        <taxon>Bacteria</taxon>
        <taxon>Pseudomonadati</taxon>
        <taxon>Chlamydiota</taxon>
        <taxon>Chlamydiia</taxon>
        <taxon>Chlamydiales</taxon>
        <taxon>Chlamydiaceae</taxon>
        <taxon>Chlamydia/Chlamydophila group</taxon>
        <taxon>Chlamydia</taxon>
    </lineage>
</organism>
<name>FABZ_CHLPN</name>
<sequence length="153" mass="16925">MNQPSVIKLRELLDLLPHRYPFLLVDKVLSYDIEARSITAQKNVTINEPFFMGHFPNAPIMPGVLILEALAQAAGVLIGLVLENDRNKRIALFLGIQKAKFRQAVRPGDVLTLQADFSLISSKGGKAWAQARVDSQLVTEAELSFALVDKESI</sequence>